<organism>
    <name type="scientific">Rattus norvegicus</name>
    <name type="common">Rat</name>
    <dbReference type="NCBI Taxonomy" id="10116"/>
    <lineage>
        <taxon>Eukaryota</taxon>
        <taxon>Metazoa</taxon>
        <taxon>Chordata</taxon>
        <taxon>Craniata</taxon>
        <taxon>Vertebrata</taxon>
        <taxon>Euteleostomi</taxon>
        <taxon>Mammalia</taxon>
        <taxon>Eutheria</taxon>
        <taxon>Euarchontoglires</taxon>
        <taxon>Glires</taxon>
        <taxon>Rodentia</taxon>
        <taxon>Myomorpha</taxon>
        <taxon>Muroidea</taxon>
        <taxon>Muridae</taxon>
        <taxon>Murinae</taxon>
        <taxon>Rattus</taxon>
    </lineage>
</organism>
<sequence>MRTLTLLTALLLLALHTQAKSPQGTAEEAPDQEQLVMEDQDISISFGGDKGTALQDADVKAGVTCYCRSTRCGFRERLSGACGYRGRIYRLCCR</sequence>
<name>DEF2_RAT</name>
<gene>
    <name type="primary">Defa</name>
</gene>
<protein>
    <recommendedName>
        <fullName>Neutrophil antibiotic peptide NP-2</fullName>
        <shortName>RatNP-2</shortName>
    </recommendedName>
    <alternativeName>
        <fullName>Neutrophil defensin 2</fullName>
    </alternativeName>
</protein>
<reference key="1">
    <citation type="journal article" date="1995" name="J. Immunol.">
        <title>Rat neutrophil defensins. Precursor structures and expression during neutrophilic myelopoiesis.</title>
        <authorList>
            <person name="Yount N.Y."/>
            <person name="Wang M.-S.C."/>
            <person name="Yuan J."/>
            <person name="Banaiee N."/>
            <person name="Ouellette A.J."/>
            <person name="Selsted M.E."/>
        </authorList>
    </citation>
    <scope>NUCLEOTIDE SEQUENCE [MRNA]</scope>
    <source>
        <strain>Sprague-Dawley</strain>
        <tissue>Bone marrow</tissue>
    </source>
</reference>
<reference key="2">
    <citation type="journal article" date="1990" name="Infect. Immun.">
        <title>Polymorphic expression of defensins in neutrophils from outbred rats.</title>
        <authorList>
            <person name="Eisenhauer P.B."/>
            <person name="Harwig S.S.S.L."/>
            <person name="Szklarek D."/>
            <person name="Ganz T."/>
            <person name="Lehrer R.I."/>
        </authorList>
    </citation>
    <scope>PROTEIN SEQUENCE OF 63-94</scope>
    <source>
        <strain>Sprague-Dawley</strain>
        <tissue>Neutrophil</tissue>
    </source>
</reference>
<proteinExistence type="evidence at protein level"/>
<dbReference type="EMBL" id="U16685">
    <property type="protein sequence ID" value="AAA91973.1"/>
    <property type="molecule type" value="mRNA"/>
</dbReference>
<dbReference type="PIR" id="E61014">
    <property type="entry name" value="E61014"/>
</dbReference>
<dbReference type="RefSeq" id="NP_775451.2">
    <property type="nucleotide sequence ID" value="NM_173329.2"/>
</dbReference>
<dbReference type="SMR" id="Q62715"/>
<dbReference type="FunCoup" id="Q62715">
    <property type="interactions" value="156"/>
</dbReference>
<dbReference type="STRING" id="10116.ENSRNOP00000018501"/>
<dbReference type="PaxDb" id="10116-ENSRNOP00000018501"/>
<dbReference type="Ensembl" id="ENSRNOT00000018501.4">
    <property type="protein sequence ID" value="ENSRNOP00000018501.1"/>
    <property type="gene ID" value="ENSRNOG00000030093.3"/>
</dbReference>
<dbReference type="GeneID" id="286995"/>
<dbReference type="KEGG" id="rno:286995"/>
<dbReference type="UCSC" id="RGD:727951">
    <property type="organism name" value="rat"/>
</dbReference>
<dbReference type="AGR" id="RGD:727951"/>
<dbReference type="CTD" id="1670"/>
<dbReference type="RGD" id="727951">
    <property type="gene designation" value="Defa"/>
</dbReference>
<dbReference type="eggNOG" id="ENOG502T2EX">
    <property type="taxonomic scope" value="Eukaryota"/>
</dbReference>
<dbReference type="GeneTree" id="ENSGT00940000153268"/>
<dbReference type="HOGENOM" id="CLU_160803_0_0_1"/>
<dbReference type="InParanoid" id="Q62715"/>
<dbReference type="OMA" id="CTCRLVY"/>
<dbReference type="OrthoDB" id="9837636at2759"/>
<dbReference type="PhylomeDB" id="Q62715"/>
<dbReference type="TreeFam" id="TF338414"/>
<dbReference type="Reactome" id="R-RNO-1461973">
    <property type="pathway name" value="Defensins"/>
</dbReference>
<dbReference type="Reactome" id="R-RNO-1462054">
    <property type="pathway name" value="Alpha-defensins"/>
</dbReference>
<dbReference type="Reactome" id="R-RNO-6798695">
    <property type="pathway name" value="Neutrophil degranulation"/>
</dbReference>
<dbReference type="PRO" id="PR:Q62715"/>
<dbReference type="Proteomes" id="UP000002494">
    <property type="component" value="Chromosome 16"/>
</dbReference>
<dbReference type="Bgee" id="ENSRNOG00000030093">
    <property type="expression patterns" value="Expressed in thymus and 8 other cell types or tissues"/>
</dbReference>
<dbReference type="GO" id="GO:0005615">
    <property type="term" value="C:extracellular space"/>
    <property type="evidence" value="ECO:0000266"/>
    <property type="project" value="RGD"/>
</dbReference>
<dbReference type="GO" id="GO:0030141">
    <property type="term" value="C:secretory granule"/>
    <property type="evidence" value="ECO:0000266"/>
    <property type="project" value="RGD"/>
</dbReference>
<dbReference type="GO" id="GO:0042803">
    <property type="term" value="F:protein homodimerization activity"/>
    <property type="evidence" value="ECO:0000266"/>
    <property type="project" value="RGD"/>
</dbReference>
<dbReference type="GO" id="GO:0019731">
    <property type="term" value="P:antibacterial humoral response"/>
    <property type="evidence" value="ECO:0000318"/>
    <property type="project" value="GO_Central"/>
</dbReference>
<dbReference type="GO" id="GO:0061844">
    <property type="term" value="P:antimicrobial humoral immune response mediated by antimicrobial peptide"/>
    <property type="evidence" value="ECO:0000266"/>
    <property type="project" value="RGD"/>
</dbReference>
<dbReference type="GO" id="GO:0071222">
    <property type="term" value="P:cellular response to lipopolysaccharide"/>
    <property type="evidence" value="ECO:0000318"/>
    <property type="project" value="GO_Central"/>
</dbReference>
<dbReference type="GO" id="GO:0042742">
    <property type="term" value="P:defense response to bacterium"/>
    <property type="evidence" value="ECO:0000304"/>
    <property type="project" value="RGD"/>
</dbReference>
<dbReference type="GO" id="GO:0050832">
    <property type="term" value="P:defense response to fungus"/>
    <property type="evidence" value="ECO:0007669"/>
    <property type="project" value="UniProtKB-KW"/>
</dbReference>
<dbReference type="GO" id="GO:0050829">
    <property type="term" value="P:defense response to Gram-negative bacterium"/>
    <property type="evidence" value="ECO:0000266"/>
    <property type="project" value="RGD"/>
</dbReference>
<dbReference type="GO" id="GO:0050830">
    <property type="term" value="P:defense response to Gram-positive bacterium"/>
    <property type="evidence" value="ECO:0000266"/>
    <property type="project" value="RGD"/>
</dbReference>
<dbReference type="GO" id="GO:0051673">
    <property type="term" value="P:disruption of plasma membrane integrity in another organism"/>
    <property type="evidence" value="ECO:0000318"/>
    <property type="project" value="GO_Central"/>
</dbReference>
<dbReference type="GO" id="GO:0045087">
    <property type="term" value="P:innate immune response"/>
    <property type="evidence" value="ECO:0000266"/>
    <property type="project" value="RGD"/>
</dbReference>
<dbReference type="GO" id="GO:0002227">
    <property type="term" value="P:innate immune response in mucosa"/>
    <property type="evidence" value="ECO:0000318"/>
    <property type="project" value="GO_Central"/>
</dbReference>
<dbReference type="GO" id="GO:0051873">
    <property type="term" value="P:killing by host of symbiont cells"/>
    <property type="evidence" value="ECO:0000266"/>
    <property type="project" value="RGD"/>
</dbReference>
<dbReference type="GO" id="GO:0032757">
    <property type="term" value="P:positive regulation of interleukin-8 production"/>
    <property type="evidence" value="ECO:0000266"/>
    <property type="project" value="RGD"/>
</dbReference>
<dbReference type="GO" id="GO:1905710">
    <property type="term" value="P:positive regulation of membrane permeability"/>
    <property type="evidence" value="ECO:0000266"/>
    <property type="project" value="RGD"/>
</dbReference>
<dbReference type="GO" id="GO:0051289">
    <property type="term" value="P:protein homotetramerization"/>
    <property type="evidence" value="ECO:0000266"/>
    <property type="project" value="RGD"/>
</dbReference>
<dbReference type="InterPro" id="IPR016327">
    <property type="entry name" value="Alpha-defensin"/>
</dbReference>
<dbReference type="InterPro" id="IPR006081">
    <property type="entry name" value="Alpha-defensin_C"/>
</dbReference>
<dbReference type="InterPro" id="IPR002366">
    <property type="entry name" value="Alpha-defensin_N"/>
</dbReference>
<dbReference type="InterPro" id="IPR006080">
    <property type="entry name" value="Beta/alpha-defensin_C"/>
</dbReference>
<dbReference type="PANTHER" id="PTHR11876">
    <property type="entry name" value="ALPHA-DEFENSIN 1"/>
    <property type="match status" value="1"/>
</dbReference>
<dbReference type="PANTHER" id="PTHR11876:SF31">
    <property type="entry name" value="DEFENSIN ALPHA 10-RELATED"/>
    <property type="match status" value="1"/>
</dbReference>
<dbReference type="Pfam" id="PF00323">
    <property type="entry name" value="Defensin_1"/>
    <property type="match status" value="1"/>
</dbReference>
<dbReference type="Pfam" id="PF00879">
    <property type="entry name" value="Defensin_propep"/>
    <property type="match status" value="1"/>
</dbReference>
<dbReference type="PIRSF" id="PIRSF001875">
    <property type="entry name" value="Alpha-defensin"/>
    <property type="match status" value="1"/>
</dbReference>
<dbReference type="SMART" id="SM01418">
    <property type="entry name" value="Defensin_propep"/>
    <property type="match status" value="1"/>
</dbReference>
<dbReference type="SMART" id="SM00048">
    <property type="entry name" value="DEFSN"/>
    <property type="match status" value="1"/>
</dbReference>
<dbReference type="SUPFAM" id="SSF57392">
    <property type="entry name" value="Defensin-like"/>
    <property type="match status" value="1"/>
</dbReference>
<dbReference type="PROSITE" id="PS00269">
    <property type="entry name" value="DEFENSIN"/>
    <property type="match status" value="1"/>
</dbReference>
<feature type="signal peptide" evidence="2">
    <location>
        <begin position="1"/>
        <end position="19"/>
    </location>
</feature>
<feature type="propeptide" id="PRO_0000006861" evidence="2">
    <location>
        <begin position="20"/>
        <end position="62"/>
    </location>
</feature>
<feature type="peptide" id="PRO_0000006862" description="Neutrophil antibiotic peptide NP-2">
    <location>
        <begin position="63"/>
        <end position="94"/>
    </location>
</feature>
<feature type="disulfide bond" evidence="1">
    <location>
        <begin position="65"/>
        <end position="93"/>
    </location>
</feature>
<feature type="disulfide bond" evidence="1">
    <location>
        <begin position="67"/>
        <end position="82"/>
    </location>
</feature>
<feature type="disulfide bond" evidence="1">
    <location>
        <begin position="72"/>
        <end position="92"/>
    </location>
</feature>
<evidence type="ECO:0000250" key="1"/>
<evidence type="ECO:0000255" key="2"/>
<evidence type="ECO:0000305" key="3"/>
<accession>Q62715</accession>
<keyword id="KW-0044">Antibiotic</keyword>
<keyword id="KW-0929">Antimicrobial</keyword>
<keyword id="KW-0211">Defensin</keyword>
<keyword id="KW-0903">Direct protein sequencing</keyword>
<keyword id="KW-1015">Disulfide bond</keyword>
<keyword id="KW-0295">Fungicide</keyword>
<keyword id="KW-1185">Reference proteome</keyword>
<keyword id="KW-0964">Secreted</keyword>
<keyword id="KW-0732">Signal</keyword>
<comment type="function">
    <text>Active in vitro against S.aureus, fungi, Gram-positive and Gram-negative bacteria and to a lesser extent against an enveloped virus.</text>
</comment>
<comment type="subcellular location">
    <subcellularLocation>
        <location>Secreted</location>
    </subcellularLocation>
</comment>
<comment type="tissue specificity">
    <text>Highest expression in bone marrow and to a much lesser extent in small intestine.</text>
</comment>
<comment type="similarity">
    <text evidence="3">Belongs to the alpha-defensin family.</text>
</comment>